<evidence type="ECO:0000255" key="1">
    <source>
        <dbReference type="HAMAP-Rule" id="MF_00261"/>
    </source>
</evidence>
<evidence type="ECO:0000303" key="2">
    <source ref="2"/>
</evidence>
<evidence type="ECO:0007744" key="3">
    <source>
        <dbReference type="PDB" id="1XPP"/>
    </source>
</evidence>
<evidence type="ECO:0007829" key="4">
    <source>
        <dbReference type="PDB" id="1XPP"/>
    </source>
</evidence>
<name>RPO11_THEAC</name>
<proteinExistence type="evidence at protein level"/>
<dbReference type="EC" id="2.7.7.6" evidence="1"/>
<dbReference type="EMBL" id="AL445067">
    <property type="protein sequence ID" value="CAC12536.1"/>
    <property type="molecule type" value="Genomic_DNA"/>
</dbReference>
<dbReference type="RefSeq" id="WP_010901819.1">
    <property type="nucleotide sequence ID" value="NC_002578.1"/>
</dbReference>
<dbReference type="PDB" id="1XPP">
    <property type="method" value="X-ray"/>
    <property type="resolution" value="1.60 A"/>
    <property type="chains" value="A/B/C/D=1-111"/>
</dbReference>
<dbReference type="PDBsum" id="1XPP"/>
<dbReference type="SMR" id="Q9HIC5"/>
<dbReference type="STRING" id="273075.gene:9572643"/>
<dbReference type="PaxDb" id="273075-Ta1416"/>
<dbReference type="EnsemblBacteria" id="CAC12536">
    <property type="protein sequence ID" value="CAC12536"/>
    <property type="gene ID" value="CAC12536"/>
</dbReference>
<dbReference type="KEGG" id="tac:Ta1416"/>
<dbReference type="eggNOG" id="arCOG04111">
    <property type="taxonomic scope" value="Archaea"/>
</dbReference>
<dbReference type="HOGENOM" id="CLU_090381_5_2_2"/>
<dbReference type="InParanoid" id="Q9HIC5"/>
<dbReference type="OrthoDB" id="24205at2157"/>
<dbReference type="EvolutionaryTrace" id="Q9HIC5"/>
<dbReference type="Proteomes" id="UP000001024">
    <property type="component" value="Chromosome"/>
</dbReference>
<dbReference type="GO" id="GO:0005737">
    <property type="term" value="C:cytoplasm"/>
    <property type="evidence" value="ECO:0007669"/>
    <property type="project" value="UniProtKB-SubCell"/>
</dbReference>
<dbReference type="GO" id="GO:0000428">
    <property type="term" value="C:DNA-directed RNA polymerase complex"/>
    <property type="evidence" value="ECO:0007669"/>
    <property type="project" value="UniProtKB-KW"/>
</dbReference>
<dbReference type="GO" id="GO:0003677">
    <property type="term" value="F:DNA binding"/>
    <property type="evidence" value="ECO:0007669"/>
    <property type="project" value="InterPro"/>
</dbReference>
<dbReference type="GO" id="GO:0003899">
    <property type="term" value="F:DNA-directed RNA polymerase activity"/>
    <property type="evidence" value="ECO:0007669"/>
    <property type="project" value="UniProtKB-UniRule"/>
</dbReference>
<dbReference type="GO" id="GO:0046983">
    <property type="term" value="F:protein dimerization activity"/>
    <property type="evidence" value="ECO:0007669"/>
    <property type="project" value="InterPro"/>
</dbReference>
<dbReference type="GO" id="GO:0006351">
    <property type="term" value="P:DNA-templated transcription"/>
    <property type="evidence" value="ECO:0007669"/>
    <property type="project" value="UniProtKB-UniRule"/>
</dbReference>
<dbReference type="Gene3D" id="3.30.1360.10">
    <property type="entry name" value="RNA polymerase, RBP11-like subunit"/>
    <property type="match status" value="1"/>
</dbReference>
<dbReference type="HAMAP" id="MF_00261">
    <property type="entry name" value="RNApol_arch_Rpo11"/>
    <property type="match status" value="1"/>
</dbReference>
<dbReference type="InterPro" id="IPR036603">
    <property type="entry name" value="RBP11-like"/>
</dbReference>
<dbReference type="InterPro" id="IPR009025">
    <property type="entry name" value="RBP11-like_dimer"/>
</dbReference>
<dbReference type="InterPro" id="IPR008193">
    <property type="entry name" value="RNA_pol_Rpb11_13-16kDa_CS"/>
</dbReference>
<dbReference type="InterPro" id="IPR022905">
    <property type="entry name" value="Rpo11-like"/>
</dbReference>
<dbReference type="NCBIfam" id="NF002241">
    <property type="entry name" value="PRK01146.2-5"/>
    <property type="match status" value="1"/>
</dbReference>
<dbReference type="PANTHER" id="PTHR13946">
    <property type="entry name" value="DNA-DIRECTED RNA POLYMERASE I,II,III"/>
    <property type="match status" value="1"/>
</dbReference>
<dbReference type="PANTHER" id="PTHR13946:SF28">
    <property type="entry name" value="DNA-DIRECTED RNA POLYMERASES I AND III SUBUNIT RPAC2"/>
    <property type="match status" value="1"/>
</dbReference>
<dbReference type="Pfam" id="PF13656">
    <property type="entry name" value="RNA_pol_L_2"/>
    <property type="match status" value="1"/>
</dbReference>
<dbReference type="SUPFAM" id="SSF55257">
    <property type="entry name" value="RBP11-like subunits of RNA polymerase"/>
    <property type="match status" value="1"/>
</dbReference>
<dbReference type="PROSITE" id="PS01154">
    <property type="entry name" value="RNA_POL_L_13KD"/>
    <property type="match status" value="1"/>
</dbReference>
<sequence length="111" mass="13133">MQRERTAESSLRVISKEKNSITVEMINYDNTLLRTLVEEILKDDQVDEARYYIKHPVIDNPQIYVRVKSGKPQSAIKRAVRKLSKLYEDLGTQFQKEFQRYESDHMIKAVE</sequence>
<protein>
    <recommendedName>
        <fullName evidence="1">DNA-directed RNA polymerase subunit Rpo11</fullName>
        <ecNumber evidence="1">2.7.7.6</ecNumber>
    </recommendedName>
    <alternativeName>
        <fullName evidence="1 2">DNA-directed RNA polymerase subunit L</fullName>
    </alternativeName>
</protein>
<reference key="1">
    <citation type="journal article" date="2000" name="Nature">
        <title>The genome sequence of the thermoacidophilic scavenger Thermoplasma acidophilum.</title>
        <authorList>
            <person name="Ruepp A."/>
            <person name="Graml W."/>
            <person name="Santos-Martinez M.-L."/>
            <person name="Koretke K.K."/>
            <person name="Volker C."/>
            <person name="Mewes H.-W."/>
            <person name="Frishman D."/>
            <person name="Stocker S."/>
            <person name="Lupas A.N."/>
            <person name="Baumeister W."/>
        </authorList>
    </citation>
    <scope>NUCLEOTIDE SEQUENCE [LARGE SCALE GENOMIC DNA]</scope>
    <source>
        <strain>ATCC 25905 / DSM 1728 / JCM 9062 / NBRC 15155 / AMRC-C165</strain>
    </source>
</reference>
<reference evidence="3" key="2">
    <citation type="submission" date="2004-11" db="PDB data bank">
        <title>Crystal structure of TA1416, DNA-directed RNA polymerase subunit L, from Thermoplasma acidophilum.</title>
        <authorList>
            <person name="Kim Y."/>
            <person name="Joachimiak A."/>
            <person name="Evdokimova E."/>
            <person name="Savchenko A."/>
            <person name="Edwards A."/>
        </authorList>
    </citation>
    <scope>X-RAY CRYSTALLOGRAPHY (1.60 ANGSTROMS)</scope>
</reference>
<gene>
    <name evidence="1" type="primary">rpo11</name>
    <name evidence="1" type="synonym">rpoL</name>
    <name type="ordered locus">Ta1416</name>
</gene>
<accession>Q9HIC5</accession>
<comment type="function">
    <text evidence="1">DNA-dependent RNA polymerase (RNAP) catalyzes the transcription of DNA into RNA using the four ribonucleoside triphosphates as substrates.</text>
</comment>
<comment type="catalytic activity">
    <reaction evidence="1">
        <text>RNA(n) + a ribonucleoside 5'-triphosphate = RNA(n+1) + diphosphate</text>
        <dbReference type="Rhea" id="RHEA:21248"/>
        <dbReference type="Rhea" id="RHEA-COMP:14527"/>
        <dbReference type="Rhea" id="RHEA-COMP:17342"/>
        <dbReference type="ChEBI" id="CHEBI:33019"/>
        <dbReference type="ChEBI" id="CHEBI:61557"/>
        <dbReference type="ChEBI" id="CHEBI:140395"/>
        <dbReference type="EC" id="2.7.7.6"/>
    </reaction>
</comment>
<comment type="subunit">
    <text evidence="1">Part of the RNA polymerase complex.</text>
</comment>
<comment type="subcellular location">
    <subcellularLocation>
        <location evidence="1">Cytoplasm</location>
    </subcellularLocation>
</comment>
<comment type="similarity">
    <text evidence="1">Belongs to the archaeal Rpo11/eukaryotic RPB11/RPC19 RNA polymerase subunit family.</text>
</comment>
<organism>
    <name type="scientific">Thermoplasma acidophilum (strain ATCC 25905 / DSM 1728 / JCM 9062 / NBRC 15155 / AMRC-C165)</name>
    <dbReference type="NCBI Taxonomy" id="273075"/>
    <lineage>
        <taxon>Archaea</taxon>
        <taxon>Methanobacteriati</taxon>
        <taxon>Thermoplasmatota</taxon>
        <taxon>Thermoplasmata</taxon>
        <taxon>Thermoplasmatales</taxon>
        <taxon>Thermoplasmataceae</taxon>
        <taxon>Thermoplasma</taxon>
    </lineage>
</organism>
<feature type="chain" id="PRO_0000149341" description="DNA-directed RNA polymerase subunit Rpo11">
    <location>
        <begin position="1"/>
        <end position="111"/>
    </location>
</feature>
<feature type="strand" evidence="4">
    <location>
        <begin position="10"/>
        <end position="16"/>
    </location>
</feature>
<feature type="strand" evidence="4">
    <location>
        <begin position="18"/>
        <end position="27"/>
    </location>
</feature>
<feature type="helix" evidence="4">
    <location>
        <begin position="30"/>
        <end position="40"/>
    </location>
</feature>
<feature type="strand" evidence="4">
    <location>
        <begin position="46"/>
        <end position="52"/>
    </location>
</feature>
<feature type="turn" evidence="4">
    <location>
        <begin position="56"/>
        <end position="58"/>
    </location>
</feature>
<feature type="strand" evidence="4">
    <location>
        <begin position="62"/>
        <end position="70"/>
    </location>
</feature>
<feature type="helix" evidence="4">
    <location>
        <begin position="72"/>
        <end position="104"/>
    </location>
</feature>
<keyword id="KW-0002">3D-structure</keyword>
<keyword id="KW-0963">Cytoplasm</keyword>
<keyword id="KW-0240">DNA-directed RNA polymerase</keyword>
<keyword id="KW-0548">Nucleotidyltransferase</keyword>
<keyword id="KW-1185">Reference proteome</keyword>
<keyword id="KW-0804">Transcription</keyword>
<keyword id="KW-0808">Transferase</keyword>